<dbReference type="EMBL" id="BC024087">
    <property type="protein sequence ID" value="AAH24087.1"/>
    <property type="molecule type" value="mRNA"/>
</dbReference>
<dbReference type="EMBL" id="BC096585">
    <property type="protein sequence ID" value="AAH96585.1"/>
    <property type="molecule type" value="mRNA"/>
</dbReference>
<dbReference type="CCDS" id="CCDS26143.2"/>
<dbReference type="CCDS" id="CCDS56860.1"/>
<dbReference type="RefSeq" id="NP_955018.2">
    <property type="nucleotide sequence ID" value="NM_199314.2"/>
</dbReference>
<dbReference type="SMR" id="Q8CIE0"/>
<dbReference type="FunCoup" id="Q8CIE0">
    <property type="interactions" value="309"/>
</dbReference>
<dbReference type="STRING" id="10090.ENSMUSP00000074258"/>
<dbReference type="GlyCosmos" id="Q8CIE0">
    <property type="glycosylation" value="4 sites, No reported glycans"/>
</dbReference>
<dbReference type="GlyGen" id="Q8CIE0">
    <property type="glycosylation" value="4 sites"/>
</dbReference>
<dbReference type="CPTAC" id="non-CPTAC-4011"/>
<dbReference type="PaxDb" id="10090-ENSMUSP00000074258"/>
<dbReference type="ProteomicsDB" id="261488"/>
<dbReference type="DNASU" id="380780"/>
<dbReference type="GeneID" id="380780"/>
<dbReference type="KEGG" id="mmu:380780"/>
<dbReference type="AGR" id="MGI:2685741"/>
<dbReference type="CTD" id="256394"/>
<dbReference type="MGI" id="MGI:2685741">
    <property type="gene designation" value="Serpina11"/>
</dbReference>
<dbReference type="eggNOG" id="KOG2392">
    <property type="taxonomic scope" value="Eukaryota"/>
</dbReference>
<dbReference type="InParanoid" id="Q8CIE0"/>
<dbReference type="OrthoDB" id="671595at2759"/>
<dbReference type="PhylomeDB" id="Q8CIE0"/>
<dbReference type="BioGRID-ORCS" id="380780">
    <property type="hits" value="2 hits in 78 CRISPR screens"/>
</dbReference>
<dbReference type="PRO" id="PR:Q8CIE0"/>
<dbReference type="Proteomes" id="UP000000589">
    <property type="component" value="Unplaced"/>
</dbReference>
<dbReference type="RNAct" id="Q8CIE0">
    <property type="molecule type" value="protein"/>
</dbReference>
<dbReference type="GO" id="GO:0005615">
    <property type="term" value="C:extracellular space"/>
    <property type="evidence" value="ECO:0007669"/>
    <property type="project" value="InterPro"/>
</dbReference>
<dbReference type="GO" id="GO:0004867">
    <property type="term" value="F:serine-type endopeptidase inhibitor activity"/>
    <property type="evidence" value="ECO:0007669"/>
    <property type="project" value="UniProtKB-KW"/>
</dbReference>
<dbReference type="CDD" id="cd19557">
    <property type="entry name" value="serpinA11"/>
    <property type="match status" value="1"/>
</dbReference>
<dbReference type="FunFam" id="2.30.39.10:FF:000003">
    <property type="entry name" value="alpha-1-antitrypsin isoform X1"/>
    <property type="match status" value="1"/>
</dbReference>
<dbReference type="FunFam" id="3.30.497.10:FF:000001">
    <property type="entry name" value="Serine protease inhibitor"/>
    <property type="match status" value="1"/>
</dbReference>
<dbReference type="FunFam" id="2.10.310.10:FF:000001">
    <property type="entry name" value="Serpin family A member 1"/>
    <property type="match status" value="1"/>
</dbReference>
<dbReference type="Gene3D" id="2.30.39.10">
    <property type="entry name" value="Alpha-1-antitrypsin, domain 1"/>
    <property type="match status" value="1"/>
</dbReference>
<dbReference type="Gene3D" id="3.30.497.10">
    <property type="entry name" value="Antithrombin, subunit I, domain 2"/>
    <property type="match status" value="1"/>
</dbReference>
<dbReference type="Gene3D" id="2.10.310.10">
    <property type="entry name" value="Serpins superfamily"/>
    <property type="match status" value="1"/>
</dbReference>
<dbReference type="InterPro" id="IPR023796">
    <property type="entry name" value="Serpin_dom"/>
</dbReference>
<dbReference type="InterPro" id="IPR000215">
    <property type="entry name" value="Serpin_fam"/>
</dbReference>
<dbReference type="InterPro" id="IPR036186">
    <property type="entry name" value="Serpin_sf"/>
</dbReference>
<dbReference type="InterPro" id="IPR042178">
    <property type="entry name" value="Serpin_sf_1"/>
</dbReference>
<dbReference type="InterPro" id="IPR042185">
    <property type="entry name" value="Serpin_sf_2"/>
</dbReference>
<dbReference type="PANTHER" id="PTHR11461">
    <property type="entry name" value="SERINE PROTEASE INHIBITOR, SERPIN"/>
    <property type="match status" value="1"/>
</dbReference>
<dbReference type="PANTHER" id="PTHR11461:SF154">
    <property type="entry name" value="SERPIN A11"/>
    <property type="match status" value="1"/>
</dbReference>
<dbReference type="Pfam" id="PF00079">
    <property type="entry name" value="Serpin"/>
    <property type="match status" value="1"/>
</dbReference>
<dbReference type="SMART" id="SM00093">
    <property type="entry name" value="SERPIN"/>
    <property type="match status" value="1"/>
</dbReference>
<dbReference type="SUPFAM" id="SSF56574">
    <property type="entry name" value="Serpins"/>
    <property type="match status" value="1"/>
</dbReference>
<accession>Q8CIE0</accession>
<evidence type="ECO:0000255" key="1"/>
<evidence type="ECO:0000305" key="2"/>
<reference key="1">
    <citation type="journal article" date="2004" name="Genome Res.">
        <title>The status, quality, and expansion of the NIH full-length cDNA project: the Mammalian Gene Collection (MGC).</title>
        <authorList>
            <consortium name="The MGC Project Team"/>
        </authorList>
    </citation>
    <scope>NUCLEOTIDE SEQUENCE [LARGE SCALE MRNA]</scope>
    <source>
        <strain>FVB/N</strain>
        <tissue>Liver</tissue>
    </source>
</reference>
<keyword id="KW-0325">Glycoprotein</keyword>
<keyword id="KW-0646">Protease inhibitor</keyword>
<keyword id="KW-1185">Reference proteome</keyword>
<keyword id="KW-0964">Secreted</keyword>
<keyword id="KW-0722">Serine protease inhibitor</keyword>
<keyword id="KW-0732">Signal</keyword>
<feature type="signal peptide" evidence="1">
    <location>
        <begin position="1"/>
        <end position="21"/>
    </location>
</feature>
<feature type="chain" id="PRO_0000041974" description="Serpin A11">
    <location>
        <begin position="22"/>
        <end position="424"/>
    </location>
</feature>
<feature type="glycosylation site" description="N-linked (GlcNAc...) asparagine" evidence="1">
    <location>
        <position position="108"/>
    </location>
</feature>
<feature type="glycosylation site" description="N-linked (GlcNAc...) asparagine" evidence="1">
    <location>
        <position position="171"/>
    </location>
</feature>
<feature type="glycosylation site" description="N-linked (GlcNAc...) asparagine" evidence="1">
    <location>
        <position position="352"/>
    </location>
</feature>
<feature type="glycosylation site" description="N-linked (GlcNAc...) asparagine" evidence="1">
    <location>
        <position position="387"/>
    </location>
</feature>
<proteinExistence type="evidence at transcript level"/>
<comment type="subcellular location">
    <subcellularLocation>
        <location evidence="2">Secreted</location>
    </subcellularLocation>
</comment>
<comment type="similarity">
    <text evidence="2">Belongs to the serpin family.</text>
</comment>
<protein>
    <recommendedName>
        <fullName>Serpin A11</fullName>
    </recommendedName>
</protein>
<sequence>MGPVWLWLWLLVAEVLLPVHCQPFSAHGDKSLGASQPASHQSLEPAPAYHKVTPTITNFALRLYKQLAEEVAGNILFSPVSLSSSLALLSLGAHADTQTQILESLGFNLTETPAADVHRGFQSLLHTLDLPSPKLELKLGHSLFLDRQLKPQQRFLDSAKELYGALAFSANFTEAAATGQQINDLVRKQTYGQVVGCLPEFSHDTLMVLLNYIFFKAKWKHPFDRYQTRKQESFSLDQRTPLRIPMMRQKEMHRFLYDQEASCTVLQIEYSGTALLLLVLPDPGKMQQVEAALQPETLRRWGQRFLPSLLDLHLPRFSISATYNLEEILPLIGLGNLFDMEADLSGIMGQLNKTVSRVSHKAIVDMNEKGTEAAAASGLLSQPPALNMTSAPQAHYNRPFLLLLWEVTTQSLLFLGKVVNPAAG</sequence>
<organism>
    <name type="scientific">Mus musculus</name>
    <name type="common">Mouse</name>
    <dbReference type="NCBI Taxonomy" id="10090"/>
    <lineage>
        <taxon>Eukaryota</taxon>
        <taxon>Metazoa</taxon>
        <taxon>Chordata</taxon>
        <taxon>Craniata</taxon>
        <taxon>Vertebrata</taxon>
        <taxon>Euteleostomi</taxon>
        <taxon>Mammalia</taxon>
        <taxon>Eutheria</taxon>
        <taxon>Euarchontoglires</taxon>
        <taxon>Glires</taxon>
        <taxon>Rodentia</taxon>
        <taxon>Myomorpha</taxon>
        <taxon>Muroidea</taxon>
        <taxon>Muridae</taxon>
        <taxon>Murinae</taxon>
        <taxon>Mus</taxon>
        <taxon>Mus</taxon>
    </lineage>
</organism>
<name>SPA11_MOUSE</name>
<gene>
    <name type="primary">Serpina11</name>
    <name type="synonym">Gm895</name>
</gene>